<comment type="function">
    <text>Uptake of inorganic phosphate, phosphorylated compounds, and some other negatively charged solutes.</text>
</comment>
<comment type="subunit">
    <text>Homotrimer.</text>
</comment>
<comment type="subcellular location">
    <subcellularLocation>
        <location>Cell outer membrane</location>
        <topology>Multi-pass membrane protein</topology>
    </subcellularLocation>
</comment>
<comment type="induction">
    <text>By phosphate starvation.</text>
</comment>
<comment type="similarity">
    <text evidence="1">Belongs to the Gram-negative porin family.</text>
</comment>
<dbReference type="EMBL" id="X68021">
    <property type="protein sequence ID" value="CAA48162.1"/>
    <property type="molecule type" value="Genomic_DNA"/>
</dbReference>
<dbReference type="PIR" id="S25520">
    <property type="entry name" value="S25520"/>
</dbReference>
<dbReference type="SMR" id="Q01605"/>
<dbReference type="STRING" id="1333848.CFNIH1_11120"/>
<dbReference type="GO" id="GO:0009279">
    <property type="term" value="C:cell outer membrane"/>
    <property type="evidence" value="ECO:0007669"/>
    <property type="project" value="UniProtKB-SubCell"/>
</dbReference>
<dbReference type="GO" id="GO:0046930">
    <property type="term" value="C:pore complex"/>
    <property type="evidence" value="ECO:0007669"/>
    <property type="project" value="UniProtKB-KW"/>
</dbReference>
<dbReference type="GO" id="GO:0015288">
    <property type="term" value="F:porin activity"/>
    <property type="evidence" value="ECO:0007669"/>
    <property type="project" value="UniProtKB-KW"/>
</dbReference>
<dbReference type="GO" id="GO:0034220">
    <property type="term" value="P:monoatomic ion transmembrane transport"/>
    <property type="evidence" value="ECO:0007669"/>
    <property type="project" value="InterPro"/>
</dbReference>
<dbReference type="CDD" id="cd00342">
    <property type="entry name" value="gram_neg_porins"/>
    <property type="match status" value="1"/>
</dbReference>
<dbReference type="FunFam" id="2.40.160.10:FF:000002">
    <property type="entry name" value="Outer membrane porin F"/>
    <property type="match status" value="1"/>
</dbReference>
<dbReference type="Gene3D" id="2.40.160.10">
    <property type="entry name" value="Porin"/>
    <property type="match status" value="1"/>
</dbReference>
<dbReference type="InterPro" id="IPR050298">
    <property type="entry name" value="Gram-neg_bact_OMP"/>
</dbReference>
<dbReference type="InterPro" id="IPR033900">
    <property type="entry name" value="Gram_neg_porin_domain"/>
</dbReference>
<dbReference type="InterPro" id="IPR023614">
    <property type="entry name" value="Porin_dom_sf"/>
</dbReference>
<dbReference type="InterPro" id="IPR001897">
    <property type="entry name" value="Porin_gammaproteobac"/>
</dbReference>
<dbReference type="InterPro" id="IPR001702">
    <property type="entry name" value="Porin_Gram-ve"/>
</dbReference>
<dbReference type="InterPro" id="IPR013793">
    <property type="entry name" value="Porin_Gram-ve_CS"/>
</dbReference>
<dbReference type="NCBIfam" id="NF007544">
    <property type="entry name" value="PRK10159.1"/>
    <property type="match status" value="1"/>
</dbReference>
<dbReference type="PANTHER" id="PTHR34501:SF5">
    <property type="entry name" value="OUTER MEMBRANE PORIN PHOE"/>
    <property type="match status" value="1"/>
</dbReference>
<dbReference type="PANTHER" id="PTHR34501">
    <property type="entry name" value="PROTEIN YDDL-RELATED"/>
    <property type="match status" value="1"/>
</dbReference>
<dbReference type="Pfam" id="PF00267">
    <property type="entry name" value="Porin_1"/>
    <property type="match status" value="1"/>
</dbReference>
<dbReference type="PRINTS" id="PR00183">
    <property type="entry name" value="ECOLIPORIN"/>
</dbReference>
<dbReference type="PRINTS" id="PR00182">
    <property type="entry name" value="ECOLNEIPORIN"/>
</dbReference>
<dbReference type="SUPFAM" id="SSF56935">
    <property type="entry name" value="Porins"/>
    <property type="match status" value="1"/>
</dbReference>
<dbReference type="PROSITE" id="PS00576">
    <property type="entry name" value="GRAM_NEG_PORIN"/>
    <property type="match status" value="1"/>
</dbReference>
<organism>
    <name type="scientific">Citrobacter freundii</name>
    <dbReference type="NCBI Taxonomy" id="546"/>
    <lineage>
        <taxon>Bacteria</taxon>
        <taxon>Pseudomonadati</taxon>
        <taxon>Pseudomonadota</taxon>
        <taxon>Gammaproteobacteria</taxon>
        <taxon>Enterobacterales</taxon>
        <taxon>Enterobacteriaceae</taxon>
        <taxon>Citrobacter</taxon>
        <taxon>Citrobacter freundii complex</taxon>
    </lineage>
</organism>
<reference key="1">
    <citation type="journal article" date="1992" name="FEMS Microbiol. Lett.">
        <title>Characterization of the Citrobacter freundii phoE gene and development of C. freundii-specific oligonucleotides.</title>
        <authorList>
            <person name="Spierings G."/>
            <person name="Ockhuijsen C."/>
            <person name="Hofstra H."/>
            <person name="Tommassen J."/>
        </authorList>
    </citation>
    <scope>NUCLEOTIDE SEQUENCE [GENOMIC DNA]</scope>
</reference>
<name>PHOE_CITFR</name>
<sequence>MKKSTLALVVMGITASASVQAAEVYNKNGNKLDLYGKVKAMHYMTDYDSKDGDQSYIRLGFKGETQINDELTGYGRWEAEFAGNKAESDSNQQKTRLAFAGSKLKNLGSFDYGRNLGALYDVEAWTDMFPEFGGDSSAQTDNFMTKRASGLATYRNTDFFGVVDGLDLTLQYQGKNQDRDVKKQNGDGFGTSVTYDFGGSDFAVSGAYTNSDRTNQQNLQTRGTGDKAEAWATGLKYDANDIYIATFYSETRNMTPISGGFANKTQNFEAVVQYQFDFGLRPSLGYVLSKGKDIEGVGNEDLVNYIDVGATYYFNKNMSAFVDYKINQLDSDNKLGINNDDIVAVGMVYQF</sequence>
<feature type="signal peptide">
    <location>
        <begin position="1"/>
        <end position="21"/>
    </location>
</feature>
<feature type="chain" id="PRO_0000025241" description="Outer membrane porin PhoE">
    <location>
        <begin position="22"/>
        <end position="351"/>
    </location>
</feature>
<proteinExistence type="evidence at transcript level"/>
<accession>Q01605</accession>
<gene>
    <name type="primary">phoE</name>
</gene>
<keyword id="KW-0998">Cell outer membrane</keyword>
<keyword id="KW-0406">Ion transport</keyword>
<keyword id="KW-0472">Membrane</keyword>
<keyword id="KW-0626">Porin</keyword>
<keyword id="KW-0732">Signal</keyword>
<keyword id="KW-0346">Stress response</keyword>
<keyword id="KW-0812">Transmembrane</keyword>
<keyword id="KW-1134">Transmembrane beta strand</keyword>
<keyword id="KW-0813">Transport</keyword>
<protein>
    <recommendedName>
        <fullName>Outer membrane porin PhoE</fullName>
    </recommendedName>
    <alternativeName>
        <fullName>Outer membrane pore protein E</fullName>
    </alternativeName>
</protein>
<evidence type="ECO:0000305" key="1"/>